<sequence>MEKYCELIRKRYAEIASGDLGYVPDALGCVLKVLNEMAADDALSEAVREKAAYAAANLLVSDYVNE</sequence>
<feature type="chain" id="PRO_1000136533" description="UPF0253 protein YaeP">
    <location>
        <begin position="1"/>
        <end position="66"/>
    </location>
</feature>
<evidence type="ECO:0000255" key="1">
    <source>
        <dbReference type="HAMAP-Rule" id="MF_01064"/>
    </source>
</evidence>
<organism>
    <name type="scientific">Escherichia coli O157:H7 (strain EC4115 / EHEC)</name>
    <dbReference type="NCBI Taxonomy" id="444450"/>
    <lineage>
        <taxon>Bacteria</taxon>
        <taxon>Pseudomonadati</taxon>
        <taxon>Pseudomonadota</taxon>
        <taxon>Gammaproteobacteria</taxon>
        <taxon>Enterobacterales</taxon>
        <taxon>Enterobacteriaceae</taxon>
        <taxon>Escherichia</taxon>
    </lineage>
</organism>
<protein>
    <recommendedName>
        <fullName evidence="1">UPF0253 protein YaeP</fullName>
    </recommendedName>
</protein>
<name>YAEP_ECO5E</name>
<reference key="1">
    <citation type="journal article" date="2011" name="Proc. Natl. Acad. Sci. U.S.A.">
        <title>Genomic anatomy of Escherichia coli O157:H7 outbreaks.</title>
        <authorList>
            <person name="Eppinger M."/>
            <person name="Mammel M.K."/>
            <person name="Leclerc J.E."/>
            <person name="Ravel J."/>
            <person name="Cebula T.A."/>
        </authorList>
    </citation>
    <scope>NUCLEOTIDE SEQUENCE [LARGE SCALE GENOMIC DNA]</scope>
    <source>
        <strain>EC4115 / EHEC</strain>
    </source>
</reference>
<gene>
    <name evidence="1" type="primary">yaeP</name>
    <name type="ordered locus">ECH74115_0200</name>
</gene>
<proteinExistence type="inferred from homology"/>
<comment type="similarity">
    <text evidence="1">Belongs to the UPF0253 family.</text>
</comment>
<accession>B5Z0G9</accession>
<dbReference type="EMBL" id="CP001164">
    <property type="protein sequence ID" value="ACI37974.1"/>
    <property type="molecule type" value="Genomic_DNA"/>
</dbReference>
<dbReference type="RefSeq" id="WP_000417058.1">
    <property type="nucleotide sequence ID" value="NC_011353.1"/>
</dbReference>
<dbReference type="SMR" id="B5Z0G9"/>
<dbReference type="KEGG" id="ecf:ECH74115_0200"/>
<dbReference type="HOGENOM" id="CLU_190008_0_0_6"/>
<dbReference type="HAMAP" id="MF_01064">
    <property type="entry name" value="UPF0253"/>
    <property type="match status" value="1"/>
</dbReference>
<dbReference type="InterPro" id="IPR009624">
    <property type="entry name" value="UPF0253"/>
</dbReference>
<dbReference type="NCBIfam" id="NF003436">
    <property type="entry name" value="PRK04964.1"/>
    <property type="match status" value="1"/>
</dbReference>
<dbReference type="Pfam" id="PF06786">
    <property type="entry name" value="UPF0253"/>
    <property type="match status" value="1"/>
</dbReference>